<feature type="chain" id="PRO_0000267337" description="dTTP/UTP pyrophosphatase">
    <location>
        <begin position="1"/>
        <end position="209"/>
    </location>
</feature>
<feature type="active site" description="Proton acceptor" evidence="1">
    <location>
        <position position="79"/>
    </location>
</feature>
<feature type="site" description="Important for substrate specificity" evidence="1">
    <location>
        <position position="15"/>
    </location>
</feature>
<feature type="site" description="Important for substrate specificity" evidence="1">
    <location>
        <position position="80"/>
    </location>
</feature>
<feature type="site" description="Important for substrate specificity" evidence="1">
    <location>
        <position position="163"/>
    </location>
</feature>
<dbReference type="EC" id="3.6.1.9" evidence="1"/>
<dbReference type="EMBL" id="CP000390">
    <property type="protein sequence ID" value="ABG61591.1"/>
    <property type="molecule type" value="Genomic_DNA"/>
</dbReference>
<dbReference type="SMR" id="Q11LY4"/>
<dbReference type="STRING" id="266779.Meso_0186"/>
<dbReference type="KEGG" id="mes:Meso_0186"/>
<dbReference type="eggNOG" id="COG0424">
    <property type="taxonomic scope" value="Bacteria"/>
</dbReference>
<dbReference type="HOGENOM" id="CLU_040416_2_0_5"/>
<dbReference type="OrthoDB" id="9807767at2"/>
<dbReference type="GO" id="GO:0005737">
    <property type="term" value="C:cytoplasm"/>
    <property type="evidence" value="ECO:0007669"/>
    <property type="project" value="UniProtKB-SubCell"/>
</dbReference>
<dbReference type="GO" id="GO:0036218">
    <property type="term" value="F:dTTP diphosphatase activity"/>
    <property type="evidence" value="ECO:0007669"/>
    <property type="project" value="RHEA"/>
</dbReference>
<dbReference type="GO" id="GO:0036221">
    <property type="term" value="F:UTP diphosphatase activity"/>
    <property type="evidence" value="ECO:0007669"/>
    <property type="project" value="RHEA"/>
</dbReference>
<dbReference type="GO" id="GO:0009117">
    <property type="term" value="P:nucleotide metabolic process"/>
    <property type="evidence" value="ECO:0007669"/>
    <property type="project" value="UniProtKB-KW"/>
</dbReference>
<dbReference type="CDD" id="cd00555">
    <property type="entry name" value="Maf"/>
    <property type="match status" value="1"/>
</dbReference>
<dbReference type="FunFam" id="3.90.950.10:FF:000005">
    <property type="entry name" value="7-methyl-GTP pyrophosphatase"/>
    <property type="match status" value="1"/>
</dbReference>
<dbReference type="Gene3D" id="3.90.950.10">
    <property type="match status" value="1"/>
</dbReference>
<dbReference type="HAMAP" id="MF_00528">
    <property type="entry name" value="Maf"/>
    <property type="match status" value="1"/>
</dbReference>
<dbReference type="InterPro" id="IPR029001">
    <property type="entry name" value="ITPase-like_fam"/>
</dbReference>
<dbReference type="InterPro" id="IPR003697">
    <property type="entry name" value="Maf-like"/>
</dbReference>
<dbReference type="NCBIfam" id="TIGR00172">
    <property type="entry name" value="maf"/>
    <property type="match status" value="1"/>
</dbReference>
<dbReference type="NCBIfam" id="NF002401">
    <property type="entry name" value="PRK01441.1"/>
    <property type="match status" value="1"/>
</dbReference>
<dbReference type="PANTHER" id="PTHR43213">
    <property type="entry name" value="BIFUNCTIONAL DTTP/UTP PYROPHOSPHATASE/METHYLTRANSFERASE PROTEIN-RELATED"/>
    <property type="match status" value="1"/>
</dbReference>
<dbReference type="PANTHER" id="PTHR43213:SF5">
    <property type="entry name" value="BIFUNCTIONAL DTTP_UTP PYROPHOSPHATASE_METHYLTRANSFERASE PROTEIN-RELATED"/>
    <property type="match status" value="1"/>
</dbReference>
<dbReference type="Pfam" id="PF02545">
    <property type="entry name" value="Maf"/>
    <property type="match status" value="1"/>
</dbReference>
<dbReference type="PIRSF" id="PIRSF006305">
    <property type="entry name" value="Maf"/>
    <property type="match status" value="1"/>
</dbReference>
<dbReference type="SUPFAM" id="SSF52972">
    <property type="entry name" value="ITPase-like"/>
    <property type="match status" value="1"/>
</dbReference>
<reference key="1">
    <citation type="submission" date="2006-06" db="EMBL/GenBank/DDBJ databases">
        <title>Complete sequence of chromosome of Mesorhizobium sp. BNC1.</title>
        <authorList>
            <consortium name="US DOE Joint Genome Institute"/>
            <person name="Copeland A."/>
            <person name="Lucas S."/>
            <person name="Lapidus A."/>
            <person name="Barry K."/>
            <person name="Detter J.C."/>
            <person name="Glavina del Rio T."/>
            <person name="Hammon N."/>
            <person name="Israni S."/>
            <person name="Dalin E."/>
            <person name="Tice H."/>
            <person name="Pitluck S."/>
            <person name="Chertkov O."/>
            <person name="Brettin T."/>
            <person name="Bruce D."/>
            <person name="Han C."/>
            <person name="Tapia R."/>
            <person name="Gilna P."/>
            <person name="Schmutz J."/>
            <person name="Larimer F."/>
            <person name="Land M."/>
            <person name="Hauser L."/>
            <person name="Kyrpides N."/>
            <person name="Mikhailova N."/>
            <person name="Richardson P."/>
        </authorList>
    </citation>
    <scope>NUCLEOTIDE SEQUENCE [LARGE SCALE GENOMIC DNA]</scope>
    <source>
        <strain>BNC1</strain>
    </source>
</reference>
<evidence type="ECO:0000255" key="1">
    <source>
        <dbReference type="HAMAP-Rule" id="MF_00528"/>
    </source>
</evidence>
<accession>Q11LY4</accession>
<protein>
    <recommendedName>
        <fullName evidence="1">dTTP/UTP pyrophosphatase</fullName>
        <shortName evidence="1">dTTPase/UTPase</shortName>
        <ecNumber evidence="1">3.6.1.9</ecNumber>
    </recommendedName>
    <alternativeName>
        <fullName evidence="1">Nucleoside triphosphate pyrophosphatase</fullName>
    </alternativeName>
    <alternativeName>
        <fullName evidence="1">Nucleotide pyrophosphatase</fullName>
        <shortName evidence="1">Nucleotide PPase</shortName>
    </alternativeName>
</protein>
<sequence>MSAPTKLILASASPRRVQLLQQAGLEPNRLVPAEIDETPLKAEHPRSLAKRLARSKAEKALERLRKDGEERDSFVLAADTVVAVGRRILPKTEIADEASNCLRLLSGRSHRVYTGICLFTPTGKLRHKLVETRVRFKRISREELEAYIASGEWRGKAGGYAIQGLAGSFVVKLVGSYTNVVGLPLHETVSLLAADGFKAYLNWPAGTQV</sequence>
<proteinExistence type="inferred from homology"/>
<comment type="function">
    <text evidence="1">Nucleoside triphosphate pyrophosphatase that hydrolyzes dTTP and UTP. May have a dual role in cell division arrest and in preventing the incorporation of modified nucleotides into cellular nucleic acids.</text>
</comment>
<comment type="catalytic activity">
    <reaction evidence="1">
        <text>dTTP + H2O = dTMP + diphosphate + H(+)</text>
        <dbReference type="Rhea" id="RHEA:28534"/>
        <dbReference type="ChEBI" id="CHEBI:15377"/>
        <dbReference type="ChEBI" id="CHEBI:15378"/>
        <dbReference type="ChEBI" id="CHEBI:33019"/>
        <dbReference type="ChEBI" id="CHEBI:37568"/>
        <dbReference type="ChEBI" id="CHEBI:63528"/>
        <dbReference type="EC" id="3.6.1.9"/>
    </reaction>
</comment>
<comment type="catalytic activity">
    <reaction evidence="1">
        <text>UTP + H2O = UMP + diphosphate + H(+)</text>
        <dbReference type="Rhea" id="RHEA:29395"/>
        <dbReference type="ChEBI" id="CHEBI:15377"/>
        <dbReference type="ChEBI" id="CHEBI:15378"/>
        <dbReference type="ChEBI" id="CHEBI:33019"/>
        <dbReference type="ChEBI" id="CHEBI:46398"/>
        <dbReference type="ChEBI" id="CHEBI:57865"/>
        <dbReference type="EC" id="3.6.1.9"/>
    </reaction>
</comment>
<comment type="cofactor">
    <cofactor evidence="1">
        <name>a divalent metal cation</name>
        <dbReference type="ChEBI" id="CHEBI:60240"/>
    </cofactor>
</comment>
<comment type="subcellular location">
    <subcellularLocation>
        <location evidence="1">Cytoplasm</location>
    </subcellularLocation>
</comment>
<comment type="similarity">
    <text evidence="1">Belongs to the Maf family. YhdE subfamily.</text>
</comment>
<organism>
    <name type="scientific">Chelativorans sp. (strain BNC1)</name>
    <dbReference type="NCBI Taxonomy" id="266779"/>
    <lineage>
        <taxon>Bacteria</taxon>
        <taxon>Pseudomonadati</taxon>
        <taxon>Pseudomonadota</taxon>
        <taxon>Alphaproteobacteria</taxon>
        <taxon>Hyphomicrobiales</taxon>
        <taxon>Phyllobacteriaceae</taxon>
        <taxon>Chelativorans</taxon>
    </lineage>
</organism>
<name>NTPPA_CHESB</name>
<keyword id="KW-0963">Cytoplasm</keyword>
<keyword id="KW-0378">Hydrolase</keyword>
<keyword id="KW-0546">Nucleotide metabolism</keyword>
<gene>
    <name type="ordered locus">Meso_0186</name>
</gene>